<dbReference type="EC" id="2.3.1.181" evidence="1"/>
<dbReference type="EMBL" id="AE010300">
    <property type="protein sequence ID" value="AAN48930.1"/>
    <property type="molecule type" value="Genomic_DNA"/>
</dbReference>
<dbReference type="RefSeq" id="NP_711912.1">
    <property type="nucleotide sequence ID" value="NC_004342.2"/>
</dbReference>
<dbReference type="SMR" id="Q8F5F1"/>
<dbReference type="FunCoup" id="Q8F5F1">
    <property type="interactions" value="296"/>
</dbReference>
<dbReference type="STRING" id="189518.LA_1731"/>
<dbReference type="PaxDb" id="189518-LA_1731"/>
<dbReference type="EnsemblBacteria" id="AAN48930">
    <property type="protein sequence ID" value="AAN48930"/>
    <property type="gene ID" value="LA_1731"/>
</dbReference>
<dbReference type="KEGG" id="lil:LA_1731"/>
<dbReference type="PATRIC" id="fig|189518.3.peg.1722"/>
<dbReference type="HOGENOM" id="CLU_035168_1_3_12"/>
<dbReference type="InParanoid" id="Q8F5F1"/>
<dbReference type="OrthoDB" id="9787061at2"/>
<dbReference type="UniPathway" id="UPA00538">
    <property type="reaction ID" value="UER00592"/>
</dbReference>
<dbReference type="Proteomes" id="UP000001408">
    <property type="component" value="Chromosome I"/>
</dbReference>
<dbReference type="GO" id="GO:0005737">
    <property type="term" value="C:cytoplasm"/>
    <property type="evidence" value="ECO:0007669"/>
    <property type="project" value="UniProtKB-SubCell"/>
</dbReference>
<dbReference type="GO" id="GO:0033819">
    <property type="term" value="F:lipoyl(octanoyl) transferase activity"/>
    <property type="evidence" value="ECO:0000318"/>
    <property type="project" value="GO_Central"/>
</dbReference>
<dbReference type="GO" id="GO:0036211">
    <property type="term" value="P:protein modification process"/>
    <property type="evidence" value="ECO:0007669"/>
    <property type="project" value="InterPro"/>
</dbReference>
<dbReference type="CDD" id="cd16444">
    <property type="entry name" value="LipB"/>
    <property type="match status" value="1"/>
</dbReference>
<dbReference type="Gene3D" id="3.30.930.10">
    <property type="entry name" value="Bira Bifunctional Protein, Domain 2"/>
    <property type="match status" value="1"/>
</dbReference>
<dbReference type="HAMAP" id="MF_00013">
    <property type="entry name" value="LipB"/>
    <property type="match status" value="1"/>
</dbReference>
<dbReference type="InterPro" id="IPR045864">
    <property type="entry name" value="aa-tRNA-synth_II/BPL/LPL"/>
</dbReference>
<dbReference type="InterPro" id="IPR004143">
    <property type="entry name" value="BPL_LPL_catalytic"/>
</dbReference>
<dbReference type="InterPro" id="IPR000544">
    <property type="entry name" value="Octanoyltransferase"/>
</dbReference>
<dbReference type="InterPro" id="IPR020605">
    <property type="entry name" value="Octanoyltransferase_CS"/>
</dbReference>
<dbReference type="NCBIfam" id="TIGR00214">
    <property type="entry name" value="lipB"/>
    <property type="match status" value="1"/>
</dbReference>
<dbReference type="PANTHER" id="PTHR10993:SF7">
    <property type="entry name" value="LIPOYLTRANSFERASE 2, MITOCHONDRIAL-RELATED"/>
    <property type="match status" value="1"/>
</dbReference>
<dbReference type="PANTHER" id="PTHR10993">
    <property type="entry name" value="OCTANOYLTRANSFERASE"/>
    <property type="match status" value="1"/>
</dbReference>
<dbReference type="Pfam" id="PF21948">
    <property type="entry name" value="LplA-B_cat"/>
    <property type="match status" value="1"/>
</dbReference>
<dbReference type="PIRSF" id="PIRSF016262">
    <property type="entry name" value="LPLase"/>
    <property type="match status" value="1"/>
</dbReference>
<dbReference type="SUPFAM" id="SSF55681">
    <property type="entry name" value="Class II aaRS and biotin synthetases"/>
    <property type="match status" value="1"/>
</dbReference>
<dbReference type="PROSITE" id="PS51733">
    <property type="entry name" value="BPL_LPL_CATALYTIC"/>
    <property type="match status" value="1"/>
</dbReference>
<dbReference type="PROSITE" id="PS01313">
    <property type="entry name" value="LIPB"/>
    <property type="match status" value="1"/>
</dbReference>
<reference key="1">
    <citation type="journal article" date="2003" name="Nature">
        <title>Unique physiological and pathogenic features of Leptospira interrogans revealed by whole-genome sequencing.</title>
        <authorList>
            <person name="Ren S.-X."/>
            <person name="Fu G."/>
            <person name="Jiang X.-G."/>
            <person name="Zeng R."/>
            <person name="Miao Y.-G."/>
            <person name="Xu H."/>
            <person name="Zhang Y.-X."/>
            <person name="Xiong H."/>
            <person name="Lu G."/>
            <person name="Lu L.-F."/>
            <person name="Jiang H.-Q."/>
            <person name="Jia J."/>
            <person name="Tu Y.-F."/>
            <person name="Jiang J.-X."/>
            <person name="Gu W.-Y."/>
            <person name="Zhang Y.-Q."/>
            <person name="Cai Z."/>
            <person name="Sheng H.-H."/>
            <person name="Yin H.-F."/>
            <person name="Zhang Y."/>
            <person name="Zhu G.-F."/>
            <person name="Wan M."/>
            <person name="Huang H.-L."/>
            <person name="Qian Z."/>
            <person name="Wang S.-Y."/>
            <person name="Ma W."/>
            <person name="Yao Z.-J."/>
            <person name="Shen Y."/>
            <person name="Qiang B.-Q."/>
            <person name="Xia Q.-C."/>
            <person name="Guo X.-K."/>
            <person name="Danchin A."/>
            <person name="Saint Girons I."/>
            <person name="Somerville R.L."/>
            <person name="Wen Y.-M."/>
            <person name="Shi M.-H."/>
            <person name="Chen Z."/>
            <person name="Xu J.-G."/>
            <person name="Zhao G.-P."/>
        </authorList>
    </citation>
    <scope>NUCLEOTIDE SEQUENCE [LARGE SCALE GENOMIC DNA]</scope>
    <source>
        <strain>56601</strain>
    </source>
</reference>
<name>LIPB_LEPIN</name>
<evidence type="ECO:0000255" key="1">
    <source>
        <dbReference type="HAMAP-Rule" id="MF_00013"/>
    </source>
</evidence>
<evidence type="ECO:0000255" key="2">
    <source>
        <dbReference type="PROSITE-ProRule" id="PRU01067"/>
    </source>
</evidence>
<feature type="chain" id="PRO_0000062845" description="Octanoyltransferase">
    <location>
        <begin position="1"/>
        <end position="216"/>
    </location>
</feature>
<feature type="domain" description="BPL/LPL catalytic" evidence="2">
    <location>
        <begin position="24"/>
        <end position="212"/>
    </location>
</feature>
<feature type="active site" description="Acyl-thioester intermediate" evidence="1">
    <location>
        <position position="171"/>
    </location>
</feature>
<feature type="binding site" evidence="1">
    <location>
        <begin position="69"/>
        <end position="76"/>
    </location>
    <ligand>
        <name>substrate</name>
    </ligand>
</feature>
<feature type="binding site" evidence="1">
    <location>
        <begin position="140"/>
        <end position="142"/>
    </location>
    <ligand>
        <name>substrate</name>
    </ligand>
</feature>
<feature type="binding site" evidence="1">
    <location>
        <begin position="153"/>
        <end position="155"/>
    </location>
    <ligand>
        <name>substrate</name>
    </ligand>
</feature>
<feature type="site" description="Lowers pKa of active site Cys" evidence="1">
    <location>
        <position position="137"/>
    </location>
</feature>
<keyword id="KW-0012">Acyltransferase</keyword>
<keyword id="KW-0963">Cytoplasm</keyword>
<keyword id="KW-1185">Reference proteome</keyword>
<keyword id="KW-0808">Transferase</keyword>
<sequence length="216" mass="24986">MKIIEFRKKIPYLRYLEMQEKLRKFRKECILFLEHAPTITGGINYNPENLLVKPEFLESMGIQIHWTQRGGDFTAHEPGQLVLYSHVDLKKRNLSIRFYLENLLRSVIDSVRSTWDLQLISDSDSPGLYLESNPSQKICSIGVNFKSFFTSHGIAFNLSNDLKTFRCINPCGRNWTNMTSVKDLGFDFGLHKRDELISCLKKNLCSFLEPINVSSS</sequence>
<organism>
    <name type="scientific">Leptospira interrogans serogroup Icterohaemorrhagiae serovar Lai (strain 56601)</name>
    <dbReference type="NCBI Taxonomy" id="189518"/>
    <lineage>
        <taxon>Bacteria</taxon>
        <taxon>Pseudomonadati</taxon>
        <taxon>Spirochaetota</taxon>
        <taxon>Spirochaetia</taxon>
        <taxon>Leptospirales</taxon>
        <taxon>Leptospiraceae</taxon>
        <taxon>Leptospira</taxon>
    </lineage>
</organism>
<proteinExistence type="inferred from homology"/>
<accession>Q8F5F1</accession>
<gene>
    <name evidence="1" type="primary">lipB</name>
    <name type="ordered locus">LA_1731</name>
</gene>
<comment type="function">
    <text evidence="1">Catalyzes the transfer of endogenously produced octanoic acid from octanoyl-acyl-carrier-protein onto the lipoyl domains of lipoate-dependent enzymes. Lipoyl-ACP can also act as a substrate although octanoyl-ACP is likely to be the physiological substrate.</text>
</comment>
<comment type="catalytic activity">
    <reaction evidence="1">
        <text>octanoyl-[ACP] + L-lysyl-[protein] = N(6)-octanoyl-L-lysyl-[protein] + holo-[ACP] + H(+)</text>
        <dbReference type="Rhea" id="RHEA:17665"/>
        <dbReference type="Rhea" id="RHEA-COMP:9636"/>
        <dbReference type="Rhea" id="RHEA-COMP:9685"/>
        <dbReference type="Rhea" id="RHEA-COMP:9752"/>
        <dbReference type="Rhea" id="RHEA-COMP:9928"/>
        <dbReference type="ChEBI" id="CHEBI:15378"/>
        <dbReference type="ChEBI" id="CHEBI:29969"/>
        <dbReference type="ChEBI" id="CHEBI:64479"/>
        <dbReference type="ChEBI" id="CHEBI:78463"/>
        <dbReference type="ChEBI" id="CHEBI:78809"/>
        <dbReference type="EC" id="2.3.1.181"/>
    </reaction>
</comment>
<comment type="pathway">
    <text evidence="1">Protein modification; protein lipoylation via endogenous pathway; protein N(6)-(lipoyl)lysine from octanoyl-[acyl-carrier-protein]: step 1/2.</text>
</comment>
<comment type="subcellular location">
    <subcellularLocation>
        <location evidence="1">Cytoplasm</location>
    </subcellularLocation>
</comment>
<comment type="miscellaneous">
    <text evidence="1">In the reaction, the free carboxyl group of octanoic acid is attached via an amide linkage to the epsilon-amino group of a specific lysine residue of lipoyl domains of lipoate-dependent enzymes.</text>
</comment>
<comment type="similarity">
    <text evidence="1">Belongs to the LipB family.</text>
</comment>
<protein>
    <recommendedName>
        <fullName evidence="1">Octanoyltransferase</fullName>
        <ecNumber evidence="1">2.3.1.181</ecNumber>
    </recommendedName>
    <alternativeName>
        <fullName evidence="1">Lipoate-protein ligase B</fullName>
    </alternativeName>
    <alternativeName>
        <fullName evidence="1">Lipoyl/octanoyl transferase</fullName>
    </alternativeName>
    <alternativeName>
        <fullName evidence="1">Octanoyl-[acyl-carrier-protein]-protein N-octanoyltransferase</fullName>
    </alternativeName>
</protein>